<comment type="function">
    <text evidence="2 4 5 6 7">Catalyzes the conversion of 17-oxosteroids to 17beta-hydroxysteroids (PubMed:32557858). Favors the reduction of androstenedione to testosterone (PubMed:32557858). Testosterone is the key androgen driving male development and function (PubMed:32190925, PubMed:32557858). Uses NADPH while the two other EDH17B enzymes use NADH (By similarity). Androgens such as epiandrosterone, dehydroepiandrosterone, androsterone and androstanedione are accepted as substrates and reduced at C-17. Can reduce 11-ketoandrostenedione as well as 11beta-hydroxyandrostenedione at C-17 to the respective testosterone forms (By similarity). Plays a role in the rate-limiting-step for the maximum level of testosterone production by the testis but does not affect basal testosterone production (PubMed:32190925, PubMed:32557858).</text>
</comment>
<comment type="catalytic activity">
    <reaction evidence="9 10">
        <text>a 17beta-hydroxy steroid + NADP(+) = a 17-oxo steroid + NADPH + H(+)</text>
        <dbReference type="Rhea" id="RHEA:69284"/>
        <dbReference type="ChEBI" id="CHEBI:15378"/>
        <dbReference type="ChEBI" id="CHEBI:19168"/>
        <dbReference type="ChEBI" id="CHEBI:35343"/>
        <dbReference type="ChEBI" id="CHEBI:57783"/>
        <dbReference type="ChEBI" id="CHEBI:58349"/>
    </reaction>
    <physiologicalReaction direction="right-to-left" evidence="9 10">
        <dbReference type="Rhea" id="RHEA:69286"/>
    </physiologicalReaction>
</comment>
<comment type="catalytic activity">
    <reaction evidence="9 10">
        <text>testosterone + NADP(+) = androst-4-ene-3,17-dione + NADPH + H(+)</text>
        <dbReference type="Rhea" id="RHEA:14981"/>
        <dbReference type="ChEBI" id="CHEBI:15378"/>
        <dbReference type="ChEBI" id="CHEBI:16422"/>
        <dbReference type="ChEBI" id="CHEBI:17347"/>
        <dbReference type="ChEBI" id="CHEBI:57783"/>
        <dbReference type="ChEBI" id="CHEBI:58349"/>
        <dbReference type="EC" id="1.1.1.64"/>
    </reaction>
    <physiologicalReaction direction="right-to-left" evidence="9 10">
        <dbReference type="Rhea" id="RHEA:14983"/>
    </physiologicalReaction>
</comment>
<comment type="catalytic activity">
    <reaction evidence="2">
        <text>17beta-estradiol + NADP(+) = estrone + NADPH + H(+)</text>
        <dbReference type="Rhea" id="RHEA:24616"/>
        <dbReference type="ChEBI" id="CHEBI:15378"/>
        <dbReference type="ChEBI" id="CHEBI:16469"/>
        <dbReference type="ChEBI" id="CHEBI:17263"/>
        <dbReference type="ChEBI" id="CHEBI:57783"/>
        <dbReference type="ChEBI" id="CHEBI:58349"/>
        <dbReference type="EC" id="1.1.1.62"/>
    </reaction>
    <physiologicalReaction direction="right-to-left" evidence="2">
        <dbReference type="Rhea" id="RHEA:24618"/>
    </physiologicalReaction>
</comment>
<comment type="catalytic activity">
    <reaction evidence="2">
        <text>3beta-hydroxyandrost-5-en-17-one + NADPH + H(+) = androst-5-en-3beta,17beta-diol + NADP(+)</text>
        <dbReference type="Rhea" id="RHEA:46628"/>
        <dbReference type="ChEBI" id="CHEBI:2710"/>
        <dbReference type="ChEBI" id="CHEBI:15378"/>
        <dbReference type="ChEBI" id="CHEBI:28689"/>
        <dbReference type="ChEBI" id="CHEBI:57783"/>
        <dbReference type="ChEBI" id="CHEBI:58349"/>
    </reaction>
    <physiologicalReaction direction="left-to-right" evidence="2">
        <dbReference type="Rhea" id="RHEA:46629"/>
    </physiologicalReaction>
</comment>
<comment type="catalytic activity">
    <reaction evidence="2">
        <text>17beta-hydroxy-5alpha-androstan-3-one + NADP(+) = 5alpha-androstan-3,17-dione + NADPH + H(+)</text>
        <dbReference type="Rhea" id="RHEA:42120"/>
        <dbReference type="ChEBI" id="CHEBI:15378"/>
        <dbReference type="ChEBI" id="CHEBI:15994"/>
        <dbReference type="ChEBI" id="CHEBI:16330"/>
        <dbReference type="ChEBI" id="CHEBI:57783"/>
        <dbReference type="ChEBI" id="CHEBI:58349"/>
    </reaction>
    <physiologicalReaction direction="right-to-left" evidence="2">
        <dbReference type="Rhea" id="RHEA:42122"/>
    </physiologicalReaction>
</comment>
<comment type="catalytic activity">
    <reaction evidence="2">
        <text>androsterone + NADPH + H(+) = 5alpha-androstane-3alpha,17beta-diol + NADP(+)</text>
        <dbReference type="Rhea" id="RHEA:42156"/>
        <dbReference type="ChEBI" id="CHEBI:15378"/>
        <dbReference type="ChEBI" id="CHEBI:16032"/>
        <dbReference type="ChEBI" id="CHEBI:36713"/>
        <dbReference type="ChEBI" id="CHEBI:57783"/>
        <dbReference type="ChEBI" id="CHEBI:58349"/>
    </reaction>
    <physiologicalReaction direction="left-to-right" evidence="2">
        <dbReference type="Rhea" id="RHEA:42157"/>
    </physiologicalReaction>
</comment>
<comment type="catalytic activity">
    <reaction evidence="2">
        <text>3beta-hydroxy-5alpha-androstan-17-one + NADPH + H(+) = 5alpha-androstane-3beta,17beta-diol + NADP(+)</text>
        <dbReference type="Rhea" id="RHEA:53480"/>
        <dbReference type="ChEBI" id="CHEBI:15378"/>
        <dbReference type="ChEBI" id="CHEBI:18329"/>
        <dbReference type="ChEBI" id="CHEBI:57783"/>
        <dbReference type="ChEBI" id="CHEBI:58349"/>
        <dbReference type="ChEBI" id="CHEBI:541975"/>
    </reaction>
    <physiologicalReaction direction="left-to-right" evidence="2">
        <dbReference type="Rhea" id="RHEA:53481"/>
    </physiologicalReaction>
</comment>
<comment type="catalytic activity">
    <reaction evidence="2">
        <text>androst-4-ene-3,11,17-trione + NADPH + H(+) = 17beta-hydroxyandrost-4-ene-3,11-dione + NADP(+)</text>
        <dbReference type="Rhea" id="RHEA:53484"/>
        <dbReference type="ChEBI" id="CHEBI:2495"/>
        <dbReference type="ChEBI" id="CHEBI:15378"/>
        <dbReference type="ChEBI" id="CHEBI:34133"/>
        <dbReference type="ChEBI" id="CHEBI:57783"/>
        <dbReference type="ChEBI" id="CHEBI:58349"/>
    </reaction>
    <physiologicalReaction direction="left-to-right" evidence="2">
        <dbReference type="Rhea" id="RHEA:53485"/>
    </physiologicalReaction>
</comment>
<comment type="catalytic activity">
    <reaction evidence="2">
        <text>11beta-hydroxyandrost-4-ene-3,17-dione + NADPH + H(+) = 11beta,17beta-dihydroxyandrost-4-ene-3-one + NADP(+)</text>
        <dbReference type="Rhea" id="RHEA:53488"/>
        <dbReference type="ChEBI" id="CHEBI:15378"/>
        <dbReference type="ChEBI" id="CHEBI:27967"/>
        <dbReference type="ChEBI" id="CHEBI:57783"/>
        <dbReference type="ChEBI" id="CHEBI:58349"/>
        <dbReference type="ChEBI" id="CHEBI:81481"/>
    </reaction>
    <physiologicalReaction direction="left-to-right" evidence="2">
        <dbReference type="Rhea" id="RHEA:53489"/>
    </physiologicalReaction>
</comment>
<comment type="pathway">
    <text evidence="4 5">Hormone biosynthesis; testosterone biosynthesis.</text>
</comment>
<comment type="pathway">
    <text evidence="4 5">Steroid metabolism.</text>
</comment>
<comment type="subcellular location">
    <subcellularLocation>
        <location evidence="2">Endoplasmic reticulum</location>
    </subcellularLocation>
</comment>
<comment type="tissue specificity">
    <text evidence="4 5">Expressed in the testes.</text>
</comment>
<comment type="developmental stage">
    <text evidence="4 5">Expression is restricted to Sertoli cells in fetal life, peaks in neonatal mice, declines thereafter until the age of 21 days, and appears in Leydig cells in adulthood.</text>
</comment>
<comment type="disruption phenotype">
    <text evidence="4 5">Null males have increased circulating luteinizing hormone (LH) levels (PubMed:32557858). Null males present mild hypogonadism at adulthood represented by lowered weight of testes and several other androgen-sensitive tissues, a shortened anogenital distance, delayed puberty, and subfertility (fewer litters) (PubMed:32190925). No phenotypic alterations in the null female (PubMed:32190925, PubMed:32557858).</text>
</comment>
<comment type="similarity">
    <text evidence="8">Belongs to the short-chain dehydrogenases/reductases (SDR) family. 17-beta-HSD 3 subfamily.</text>
</comment>
<gene>
    <name evidence="11" type="primary">Hsd17b3</name>
    <name type="synonym">Edh17b3</name>
</gene>
<feature type="chain" id="PRO_0000054574" description="17-beta-hydroxysteroid dehydrogenase type 3">
    <location>
        <begin position="1"/>
        <end position="305"/>
    </location>
</feature>
<feature type="active site" description="Proton acceptor" evidence="3">
    <location>
        <position position="194"/>
    </location>
</feature>
<feature type="binding site" evidence="1">
    <location>
        <begin position="44"/>
        <end position="73"/>
    </location>
    <ligand>
        <name>NADP(+)</name>
        <dbReference type="ChEBI" id="CHEBI:58349"/>
    </ligand>
</feature>
<feature type="binding site" evidence="1">
    <location>
        <position position="181"/>
    </location>
    <ligand>
        <name>substrate</name>
    </ligand>
</feature>
<feature type="sequence conflict" description="In Ref. 1; AAB06793." evidence="8" ref="1">
    <original>C</original>
    <variation>G</variation>
    <location>
        <position position="95"/>
    </location>
</feature>
<feature type="sequence conflict" description="In Ref. 1; AAB06793." evidence="8" ref="1">
    <original>I</original>
    <variation>N</variation>
    <location>
        <position position="121"/>
    </location>
</feature>
<feature type="sequence conflict" description="In Ref. 1; AAB06793." evidence="8" ref="1">
    <original>T</original>
    <variation>S</variation>
    <location>
        <position position="142"/>
    </location>
</feature>
<accession>P70385</accession>
<accession>G3UWF9</accession>
<keyword id="KW-0903">Direct protein sequencing</keyword>
<keyword id="KW-0256">Endoplasmic reticulum</keyword>
<keyword id="KW-0444">Lipid biosynthesis</keyword>
<keyword id="KW-0443">Lipid metabolism</keyword>
<keyword id="KW-0521">NADP</keyword>
<keyword id="KW-0560">Oxidoreductase</keyword>
<keyword id="KW-1185">Reference proteome</keyword>
<keyword id="KW-0752">Steroid biosynthesis</keyword>
<sequence>MEKLFIAAGLFVGLVCLVKCMRFSQHLFLRFCKALPSSFLRSMGQWAVITGAGDGIGKAYSFELARHGLNVVLISRTLEKLQTIAEEIERTTGSCVKIVQADFTREDIYDHIKEHLEGLEIGILVNNVGMLPSFFPSHFLSTSGESQNLIHCNITSVVKMTQLVLKHMESRRKGLILNISSGAALRPWPLYSLYSASKAFVYTFSKALSVEYRDKGIIIQVLTPYSISTPMTKYLNNKMTKTADEFVKESLKYVTIGAESCGCLAHEIIAIILNRIPSRIFYSSTAQRFLLTRYSDYLKRNISNR</sequence>
<reference key="1">
    <citation type="journal article" date="1997" name="J. Steroid Biochem. Mol. Biol.">
        <title>Sequence of mouse 17beta-hydroxysteroid dehydrogenase type 3 cDNA and tissue distribution of the type 1 and type 3 isoform mRNAs.</title>
        <authorList>
            <person name="Sha J.A."/>
            <person name="Dudley K."/>
            <person name="Rajapaksha W.R.A.K.J.S."/>
            <person name="O'Shaughnessy P.J."/>
        </authorList>
    </citation>
    <scope>NUCLEOTIDE SEQUENCE [MRNA]</scope>
    <source>
        <tissue>Testis</tissue>
    </source>
</reference>
<reference key="2">
    <citation type="journal article" date="2009" name="PLoS Biol.">
        <title>Lineage-specific biology revealed by a finished genome assembly of the mouse.</title>
        <authorList>
            <person name="Church D.M."/>
            <person name="Goodstadt L."/>
            <person name="Hillier L.W."/>
            <person name="Zody M.C."/>
            <person name="Goldstein S."/>
            <person name="She X."/>
            <person name="Bult C.J."/>
            <person name="Agarwala R."/>
            <person name="Cherry J.L."/>
            <person name="DiCuccio M."/>
            <person name="Hlavina W."/>
            <person name="Kapustin Y."/>
            <person name="Meric P."/>
            <person name="Maglott D."/>
            <person name="Birtle Z."/>
            <person name="Marques A.C."/>
            <person name="Graves T."/>
            <person name="Zhou S."/>
            <person name="Teague B."/>
            <person name="Potamousis K."/>
            <person name="Churas C."/>
            <person name="Place M."/>
            <person name="Herschleb J."/>
            <person name="Runnheim R."/>
            <person name="Forrest D."/>
            <person name="Amos-Landgraf J."/>
            <person name="Schwartz D.C."/>
            <person name="Cheng Z."/>
            <person name="Lindblad-Toh K."/>
            <person name="Eichler E.E."/>
            <person name="Ponting C.P."/>
        </authorList>
    </citation>
    <scope>NUCLEOTIDE SEQUENCE [LARGE SCALE GENOMIC DNA]</scope>
    <source>
        <strain>C57BL/6J</strain>
    </source>
</reference>
<reference key="3">
    <citation type="submission" date="2005-07" db="EMBL/GenBank/DDBJ databases">
        <authorList>
            <person name="Mural R.J."/>
            <person name="Adams M.D."/>
            <person name="Myers E.W."/>
            <person name="Smith H.O."/>
            <person name="Venter J.C."/>
        </authorList>
    </citation>
    <scope>NUCLEOTIDE SEQUENCE [LARGE SCALE GENOMIC DNA]</scope>
</reference>
<reference key="4">
    <citation type="submission" date="2009-01" db="UniProtKB">
        <authorList>
            <person name="Lubec G."/>
            <person name="Sunyer B."/>
            <person name="Chen W.-Q."/>
        </authorList>
    </citation>
    <scope>PROTEIN SEQUENCE OF 81-90</scope>
    <scope>IDENTIFICATION BY MASS SPECTROMETRY</scope>
    <source>
        <strain>OF1</strain>
        <tissue>Hippocampus</tissue>
    </source>
</reference>
<reference key="5">
    <citation type="journal article" date="2020" name="FASEB J.">
        <title>The lack of HSD17B3 in male mice results in disturbed Leydig cell maturation and endocrine imbalance akin to humans with HSD17B3 deficiency.</title>
        <authorList>
            <person name="Sipilae P."/>
            <person name="Junnila A."/>
            <person name="Hakkarainen J."/>
            <person name="Huhtaniemi R."/>
            <person name="Mairinoja L."/>
            <person name="Zhang F.P."/>
            <person name="Strauss L."/>
            <person name="Ohlsson C."/>
            <person name="Kotaja N."/>
            <person name="Huhtaniemi I."/>
            <person name="Poutanen M."/>
        </authorList>
    </citation>
    <scope>FUNCTION</scope>
    <scope>CATALYTIC ACTIVITY</scope>
    <scope>TISSUE SPECIFICITY</scope>
    <scope>DEVELOPMENTAL STAGE</scope>
    <scope>DISRUPTION PHENOTYPE</scope>
</reference>
<reference key="6">
    <citation type="journal article" date="2020" name="FASEB J.">
        <title>Ablation of the canonical testosterone production pathway via knockout of the steroidogenic enzyme HSD17B3, reveals a novel mechanism of testicular testosterone production.</title>
        <authorList>
            <person name="Rebourcet D."/>
            <person name="Mackay R."/>
            <person name="Darbey A."/>
            <person name="Curley M.K."/>
            <person name="Joergensen A."/>
            <person name="Frederiksen H."/>
            <person name="Mitchell R.T."/>
            <person name="O'Shaughnessy P.J."/>
            <person name="Nef S."/>
            <person name="Smith L.B."/>
        </authorList>
    </citation>
    <scope>FUNCTION</scope>
    <scope>CATALYTIC ACTIVITY</scope>
    <scope>TISSUE SPECIFICITY</scope>
    <scope>DEVELOPMENTAL STAGE</scope>
    <scope>DISRUPTION PHENOTYPE</scope>
</reference>
<name>DHB3_MOUSE</name>
<organism>
    <name type="scientific">Mus musculus</name>
    <name type="common">Mouse</name>
    <dbReference type="NCBI Taxonomy" id="10090"/>
    <lineage>
        <taxon>Eukaryota</taxon>
        <taxon>Metazoa</taxon>
        <taxon>Chordata</taxon>
        <taxon>Craniata</taxon>
        <taxon>Vertebrata</taxon>
        <taxon>Euteleostomi</taxon>
        <taxon>Mammalia</taxon>
        <taxon>Eutheria</taxon>
        <taxon>Euarchontoglires</taxon>
        <taxon>Glires</taxon>
        <taxon>Rodentia</taxon>
        <taxon>Myomorpha</taxon>
        <taxon>Muroidea</taxon>
        <taxon>Muridae</taxon>
        <taxon>Murinae</taxon>
        <taxon>Mus</taxon>
        <taxon>Mus</taxon>
    </lineage>
</organism>
<evidence type="ECO:0000250" key="1"/>
<evidence type="ECO:0000250" key="2">
    <source>
        <dbReference type="UniProtKB" id="P37058"/>
    </source>
</evidence>
<evidence type="ECO:0000255" key="3">
    <source>
        <dbReference type="PROSITE-ProRule" id="PRU10001"/>
    </source>
</evidence>
<evidence type="ECO:0000269" key="4">
    <source>
    </source>
</evidence>
<evidence type="ECO:0000269" key="5">
    <source>
    </source>
</evidence>
<evidence type="ECO:0000303" key="6">
    <source>
    </source>
</evidence>
<evidence type="ECO:0000303" key="7">
    <source>
    </source>
</evidence>
<evidence type="ECO:0000305" key="8"/>
<evidence type="ECO:0000305" key="9">
    <source>
    </source>
</evidence>
<evidence type="ECO:0000305" key="10">
    <source>
    </source>
</evidence>
<evidence type="ECO:0000312" key="11">
    <source>
        <dbReference type="MGI" id="MGI:107177"/>
    </source>
</evidence>
<protein>
    <recommendedName>
        <fullName>17-beta-hydroxysteroid dehydrogenase type 3</fullName>
        <shortName>17-beta-HSD 3</shortName>
    </recommendedName>
    <alternativeName>
        <fullName>Estradiol 17-beta-dehydrogenase 2</fullName>
        <ecNumber evidence="2">1.1.1.62</ecNumber>
    </alternativeName>
    <alternativeName>
        <fullName>Testicular 17-beta-hydroxysteroid dehydrogenase</fullName>
    </alternativeName>
    <alternativeName>
        <fullName evidence="8">Testosterone 17-beta-dehydrogenase 3</fullName>
        <ecNumber evidence="2">1.1.1.64</ecNumber>
    </alternativeName>
</protein>
<dbReference type="EC" id="1.1.1.62" evidence="2"/>
<dbReference type="EC" id="1.1.1.64" evidence="2"/>
<dbReference type="EMBL" id="U66827">
    <property type="protein sequence ID" value="AAB06793.1"/>
    <property type="molecule type" value="mRNA"/>
</dbReference>
<dbReference type="EMBL" id="CT009717">
    <property type="status" value="NOT_ANNOTATED_CDS"/>
    <property type="molecule type" value="Genomic_DNA"/>
</dbReference>
<dbReference type="EMBL" id="CH466631">
    <property type="protein sequence ID" value="EDL16224.1"/>
    <property type="molecule type" value="Genomic_DNA"/>
</dbReference>
<dbReference type="CCDS" id="CCDS26594.1"/>
<dbReference type="RefSeq" id="NP_032317.2">
    <property type="nucleotide sequence ID" value="NM_008291.3"/>
</dbReference>
<dbReference type="SMR" id="P70385"/>
<dbReference type="FunCoup" id="P70385">
    <property type="interactions" value="288"/>
</dbReference>
<dbReference type="STRING" id="10090.ENSMUSP00000132011"/>
<dbReference type="BindingDB" id="P70385"/>
<dbReference type="ChEMBL" id="CHEMBL1932905"/>
<dbReference type="PhosphoSitePlus" id="P70385"/>
<dbReference type="SwissPalm" id="P70385"/>
<dbReference type="PaxDb" id="10090-ENSMUSP00000132011"/>
<dbReference type="ProteomicsDB" id="279413"/>
<dbReference type="Antibodypedia" id="3099">
    <property type="antibodies" value="178 antibodies from 26 providers"/>
</dbReference>
<dbReference type="DNASU" id="15487"/>
<dbReference type="Ensembl" id="ENSMUST00000166224.8">
    <property type="protein sequence ID" value="ENSMUSP00000132011.2"/>
    <property type="gene ID" value="ENSMUSG00000033122.16"/>
</dbReference>
<dbReference type="Ensembl" id="ENSMUST00000222783.2">
    <property type="protein sequence ID" value="ENSMUSP00000152848.2"/>
    <property type="gene ID" value="ENSMUSG00000033122.16"/>
</dbReference>
<dbReference type="GeneID" id="15487"/>
<dbReference type="KEGG" id="mmu:15487"/>
<dbReference type="UCSC" id="uc007qyf.1">
    <property type="organism name" value="mouse"/>
</dbReference>
<dbReference type="AGR" id="MGI:107177"/>
<dbReference type="CTD" id="3293"/>
<dbReference type="MGI" id="MGI:107177">
    <property type="gene designation" value="Hsd17b3"/>
</dbReference>
<dbReference type="VEuPathDB" id="HostDB:ENSMUSG00000033122"/>
<dbReference type="eggNOG" id="KOG1014">
    <property type="taxonomic scope" value="Eukaryota"/>
</dbReference>
<dbReference type="GeneTree" id="ENSGT00940000160266"/>
<dbReference type="HOGENOM" id="CLU_010194_38_0_1"/>
<dbReference type="InParanoid" id="P70385"/>
<dbReference type="OMA" id="GNMPIPN"/>
<dbReference type="OrthoDB" id="5545019at2759"/>
<dbReference type="PhylomeDB" id="P70385"/>
<dbReference type="TreeFam" id="TF314591"/>
<dbReference type="Reactome" id="R-MMU-193048">
    <property type="pathway name" value="Androgen biosynthesis"/>
</dbReference>
<dbReference type="Reactome" id="R-MMU-75876">
    <property type="pathway name" value="Synthesis of very long-chain fatty acyl-CoAs"/>
</dbReference>
<dbReference type="UniPathway" id="UPA00367"/>
<dbReference type="BioGRID-ORCS" id="15487">
    <property type="hits" value="1 hit in 82 CRISPR screens"/>
</dbReference>
<dbReference type="ChiTaRS" id="Hsd17b3">
    <property type="organism name" value="mouse"/>
</dbReference>
<dbReference type="PRO" id="PR:P70385"/>
<dbReference type="Proteomes" id="UP000000589">
    <property type="component" value="Chromosome 13"/>
</dbReference>
<dbReference type="RNAct" id="P70385">
    <property type="molecule type" value="protein"/>
</dbReference>
<dbReference type="Bgee" id="ENSMUSG00000033122">
    <property type="expression patterns" value="Expressed in gonadal ridge and 22 other cell types or tissues"/>
</dbReference>
<dbReference type="ExpressionAtlas" id="P70385">
    <property type="expression patterns" value="baseline and differential"/>
</dbReference>
<dbReference type="GO" id="GO:0005783">
    <property type="term" value="C:endoplasmic reticulum"/>
    <property type="evidence" value="ECO:0000314"/>
    <property type="project" value="MGI"/>
</dbReference>
<dbReference type="GO" id="GO:0005789">
    <property type="term" value="C:endoplasmic reticulum membrane"/>
    <property type="evidence" value="ECO:0000314"/>
    <property type="project" value="MGI"/>
</dbReference>
<dbReference type="GO" id="GO:0004303">
    <property type="term" value="F:estradiol 17-beta-dehydrogenase [NAD(P)+] activity"/>
    <property type="evidence" value="ECO:0007669"/>
    <property type="project" value="UniProtKB-EC"/>
</dbReference>
<dbReference type="GO" id="GO:0047045">
    <property type="term" value="F:testosterone 17-beta-dehydrogenase (NADP+) activity"/>
    <property type="evidence" value="ECO:0000250"/>
    <property type="project" value="UniProtKB"/>
</dbReference>
<dbReference type="GO" id="GO:0030283">
    <property type="term" value="F:testosterone dehydrogenase [NAD(P)+] activity"/>
    <property type="evidence" value="ECO:0000315"/>
    <property type="project" value="MGI"/>
</dbReference>
<dbReference type="GO" id="GO:0006702">
    <property type="term" value="P:androgen biosynthetic process"/>
    <property type="evidence" value="ECO:0000315"/>
    <property type="project" value="MGI"/>
</dbReference>
<dbReference type="GO" id="GO:0061370">
    <property type="term" value="P:testosterone biosynthetic process"/>
    <property type="evidence" value="ECO:0007669"/>
    <property type="project" value="UniProtKB-UniPathway"/>
</dbReference>
<dbReference type="CDD" id="cd05356">
    <property type="entry name" value="17beta-HSD1_like_SDR_c"/>
    <property type="match status" value="1"/>
</dbReference>
<dbReference type="FunFam" id="3.40.50.720:FF:000137">
    <property type="entry name" value="Hydroxysteroid (17-beta) dehydrogenase 3"/>
    <property type="match status" value="1"/>
</dbReference>
<dbReference type="Gene3D" id="3.40.50.720">
    <property type="entry name" value="NAD(P)-binding Rossmann-like Domain"/>
    <property type="match status" value="1"/>
</dbReference>
<dbReference type="InterPro" id="IPR036291">
    <property type="entry name" value="NAD(P)-bd_dom_sf"/>
</dbReference>
<dbReference type="InterPro" id="IPR020904">
    <property type="entry name" value="Sc_DH/Rdtase_CS"/>
</dbReference>
<dbReference type="InterPro" id="IPR002347">
    <property type="entry name" value="SDR_fam"/>
</dbReference>
<dbReference type="InterPro" id="IPR051019">
    <property type="entry name" value="VLCFA-Steroid_DH"/>
</dbReference>
<dbReference type="PANTHER" id="PTHR43899:SF7">
    <property type="entry name" value="17-BETA-HYDROXYSTEROID DEHYDROGENASE TYPE 3"/>
    <property type="match status" value="1"/>
</dbReference>
<dbReference type="PANTHER" id="PTHR43899">
    <property type="entry name" value="RH59310P"/>
    <property type="match status" value="1"/>
</dbReference>
<dbReference type="Pfam" id="PF00106">
    <property type="entry name" value="adh_short"/>
    <property type="match status" value="1"/>
</dbReference>
<dbReference type="PIRSF" id="PIRSF000126">
    <property type="entry name" value="11-beta-HSD1"/>
    <property type="match status" value="1"/>
</dbReference>
<dbReference type="PRINTS" id="PR00081">
    <property type="entry name" value="GDHRDH"/>
</dbReference>
<dbReference type="PRINTS" id="PR00080">
    <property type="entry name" value="SDRFAMILY"/>
</dbReference>
<dbReference type="SUPFAM" id="SSF51735">
    <property type="entry name" value="NAD(P)-binding Rossmann-fold domains"/>
    <property type="match status" value="1"/>
</dbReference>
<dbReference type="PROSITE" id="PS00061">
    <property type="entry name" value="ADH_SHORT"/>
    <property type="match status" value="1"/>
</dbReference>
<proteinExistence type="evidence at protein level"/>